<name>FAR7_ASCSU</name>
<protein>
    <recommendedName>
        <fullName>FMRFamide-like neuropeptide AF7</fullName>
    </recommendedName>
</protein>
<accession>P43171</accession>
<sequence>AGPRFIRF</sequence>
<comment type="subcellular location">
    <subcellularLocation>
        <location>Secreted</location>
    </subcellularLocation>
</comment>
<comment type="similarity">
    <text evidence="2">Belongs to the FARP (FMRFamide related peptide) family.</text>
</comment>
<reference key="1">
    <citation type="journal article" date="1995" name="Peptides">
        <title>Eight novel FMRFamide-like neuropeptides isolated from the nematode Ascaris suum.</title>
        <authorList>
            <person name="Cowden C."/>
            <person name="Stretton A.O.W."/>
        </authorList>
    </citation>
    <scope>PROTEIN SEQUENCE</scope>
    <scope>AMIDATION AT PHE-8</scope>
</reference>
<keyword id="KW-0027">Amidation</keyword>
<keyword id="KW-0903">Direct protein sequencing</keyword>
<keyword id="KW-0527">Neuropeptide</keyword>
<keyword id="KW-0964">Secreted</keyword>
<dbReference type="GO" id="GO:0005576">
    <property type="term" value="C:extracellular region"/>
    <property type="evidence" value="ECO:0007669"/>
    <property type="project" value="UniProtKB-SubCell"/>
</dbReference>
<dbReference type="GO" id="GO:0007218">
    <property type="term" value="P:neuropeptide signaling pathway"/>
    <property type="evidence" value="ECO:0007669"/>
    <property type="project" value="UniProtKB-KW"/>
</dbReference>
<proteinExistence type="evidence at protein level"/>
<feature type="peptide" id="PRO_0000043659" description="FMRFamide-like neuropeptide AF7">
    <location>
        <begin position="1"/>
        <end position="8"/>
    </location>
</feature>
<feature type="modified residue" description="Phenylalanine amide" evidence="1">
    <location>
        <position position="8"/>
    </location>
</feature>
<organism>
    <name type="scientific">Ascaris suum</name>
    <name type="common">Pig roundworm</name>
    <name type="synonym">Ascaris lumbricoides</name>
    <dbReference type="NCBI Taxonomy" id="6253"/>
    <lineage>
        <taxon>Eukaryota</taxon>
        <taxon>Metazoa</taxon>
        <taxon>Ecdysozoa</taxon>
        <taxon>Nematoda</taxon>
        <taxon>Chromadorea</taxon>
        <taxon>Rhabditida</taxon>
        <taxon>Spirurina</taxon>
        <taxon>Ascaridomorpha</taxon>
        <taxon>Ascaridoidea</taxon>
        <taxon>Ascarididae</taxon>
        <taxon>Ascaris</taxon>
    </lineage>
</organism>
<evidence type="ECO:0000269" key="1">
    <source>
    </source>
</evidence>
<evidence type="ECO:0000305" key="2"/>